<reference key="1">
    <citation type="journal article" date="2009" name="PLoS Genet.">
        <title>Organised genome dynamics in the Escherichia coli species results in highly diverse adaptive paths.</title>
        <authorList>
            <person name="Touchon M."/>
            <person name="Hoede C."/>
            <person name="Tenaillon O."/>
            <person name="Barbe V."/>
            <person name="Baeriswyl S."/>
            <person name="Bidet P."/>
            <person name="Bingen E."/>
            <person name="Bonacorsi S."/>
            <person name="Bouchier C."/>
            <person name="Bouvet O."/>
            <person name="Calteau A."/>
            <person name="Chiapello H."/>
            <person name="Clermont O."/>
            <person name="Cruveiller S."/>
            <person name="Danchin A."/>
            <person name="Diard M."/>
            <person name="Dossat C."/>
            <person name="Karoui M.E."/>
            <person name="Frapy E."/>
            <person name="Garry L."/>
            <person name="Ghigo J.M."/>
            <person name="Gilles A.M."/>
            <person name="Johnson J."/>
            <person name="Le Bouguenec C."/>
            <person name="Lescat M."/>
            <person name="Mangenot S."/>
            <person name="Martinez-Jehanne V."/>
            <person name="Matic I."/>
            <person name="Nassif X."/>
            <person name="Oztas S."/>
            <person name="Petit M.A."/>
            <person name="Pichon C."/>
            <person name="Rouy Z."/>
            <person name="Ruf C.S."/>
            <person name="Schneider D."/>
            <person name="Tourret J."/>
            <person name="Vacherie B."/>
            <person name="Vallenet D."/>
            <person name="Medigue C."/>
            <person name="Rocha E.P.C."/>
            <person name="Denamur E."/>
        </authorList>
    </citation>
    <scope>NUCLEOTIDE SEQUENCE [LARGE SCALE GENOMIC DNA]</scope>
    <source>
        <strain>IAI39 / ExPEC</strain>
    </source>
</reference>
<keyword id="KW-0007">Acetylation</keyword>
<keyword id="KW-0119">Carbohydrate metabolism</keyword>
<keyword id="KW-0413">Isomerase</keyword>
<keyword id="KW-0521">NADP</keyword>
<evidence type="ECO:0000255" key="1">
    <source>
        <dbReference type="HAMAP-Rule" id="MF_01601"/>
    </source>
</evidence>
<dbReference type="EC" id="5.1.3.20" evidence="1"/>
<dbReference type="EMBL" id="CU928164">
    <property type="protein sequence ID" value="CAR20247.1"/>
    <property type="molecule type" value="Genomic_DNA"/>
</dbReference>
<dbReference type="RefSeq" id="YP_002410016.1">
    <property type="nucleotide sequence ID" value="NC_011750.1"/>
</dbReference>
<dbReference type="SMR" id="B7NPC7"/>
<dbReference type="STRING" id="585057.ECIAI39_4139"/>
<dbReference type="KEGG" id="ect:ECIAI39_4139"/>
<dbReference type="PATRIC" id="fig|585057.6.peg.4290"/>
<dbReference type="HOGENOM" id="CLU_007383_1_3_6"/>
<dbReference type="UniPathway" id="UPA00356">
    <property type="reaction ID" value="UER00440"/>
</dbReference>
<dbReference type="Proteomes" id="UP000000749">
    <property type="component" value="Chromosome"/>
</dbReference>
<dbReference type="GO" id="GO:0008712">
    <property type="term" value="F:ADP-glyceromanno-heptose 6-epimerase activity"/>
    <property type="evidence" value="ECO:0007669"/>
    <property type="project" value="UniProtKB-UniRule"/>
</dbReference>
<dbReference type="GO" id="GO:0050661">
    <property type="term" value="F:NADP binding"/>
    <property type="evidence" value="ECO:0007669"/>
    <property type="project" value="InterPro"/>
</dbReference>
<dbReference type="GO" id="GO:0097171">
    <property type="term" value="P:ADP-L-glycero-beta-D-manno-heptose biosynthetic process"/>
    <property type="evidence" value="ECO:0007669"/>
    <property type="project" value="UniProtKB-UniPathway"/>
</dbReference>
<dbReference type="GO" id="GO:0005975">
    <property type="term" value="P:carbohydrate metabolic process"/>
    <property type="evidence" value="ECO:0007669"/>
    <property type="project" value="UniProtKB-UniRule"/>
</dbReference>
<dbReference type="CDD" id="cd05248">
    <property type="entry name" value="ADP_GME_SDR_e"/>
    <property type="match status" value="1"/>
</dbReference>
<dbReference type="Gene3D" id="3.40.50.720">
    <property type="entry name" value="NAD(P)-binding Rossmann-like Domain"/>
    <property type="match status" value="1"/>
</dbReference>
<dbReference type="Gene3D" id="3.90.25.10">
    <property type="entry name" value="UDP-galactose 4-epimerase, domain 1"/>
    <property type="match status" value="1"/>
</dbReference>
<dbReference type="HAMAP" id="MF_01601">
    <property type="entry name" value="Heptose_epimerase"/>
    <property type="match status" value="1"/>
</dbReference>
<dbReference type="InterPro" id="IPR001509">
    <property type="entry name" value="Epimerase_deHydtase"/>
</dbReference>
<dbReference type="InterPro" id="IPR011912">
    <property type="entry name" value="Heptose_epim"/>
</dbReference>
<dbReference type="InterPro" id="IPR036291">
    <property type="entry name" value="NAD(P)-bd_dom_sf"/>
</dbReference>
<dbReference type="NCBIfam" id="TIGR02197">
    <property type="entry name" value="heptose_epim"/>
    <property type="match status" value="1"/>
</dbReference>
<dbReference type="NCBIfam" id="NF008360">
    <property type="entry name" value="PRK11150.1"/>
    <property type="match status" value="1"/>
</dbReference>
<dbReference type="PANTHER" id="PTHR43103:SF3">
    <property type="entry name" value="ADP-L-GLYCERO-D-MANNO-HEPTOSE-6-EPIMERASE"/>
    <property type="match status" value="1"/>
</dbReference>
<dbReference type="PANTHER" id="PTHR43103">
    <property type="entry name" value="NUCLEOSIDE-DIPHOSPHATE-SUGAR EPIMERASE"/>
    <property type="match status" value="1"/>
</dbReference>
<dbReference type="Pfam" id="PF01370">
    <property type="entry name" value="Epimerase"/>
    <property type="match status" value="1"/>
</dbReference>
<dbReference type="SUPFAM" id="SSF51735">
    <property type="entry name" value="NAD(P)-binding Rossmann-fold domains"/>
    <property type="match status" value="1"/>
</dbReference>
<proteinExistence type="inferred from homology"/>
<comment type="function">
    <text evidence="1">Catalyzes the interconversion between ADP-D-glycero-beta-D-manno-heptose and ADP-L-glycero-beta-D-manno-heptose via an epimerization at carbon 6 of the heptose.</text>
</comment>
<comment type="catalytic activity">
    <reaction evidence="1">
        <text>ADP-D-glycero-beta-D-manno-heptose = ADP-L-glycero-beta-D-manno-heptose</text>
        <dbReference type="Rhea" id="RHEA:17577"/>
        <dbReference type="ChEBI" id="CHEBI:59967"/>
        <dbReference type="ChEBI" id="CHEBI:61506"/>
        <dbReference type="EC" id="5.1.3.20"/>
    </reaction>
</comment>
<comment type="cofactor">
    <cofactor evidence="1">
        <name>NADP(+)</name>
        <dbReference type="ChEBI" id="CHEBI:58349"/>
    </cofactor>
    <text evidence="1">Binds 1 NADP(+) per subunit.</text>
</comment>
<comment type="pathway">
    <text evidence="1">Nucleotide-sugar biosynthesis; ADP-L-glycero-beta-D-manno-heptose biosynthesis; ADP-L-glycero-beta-D-manno-heptose from D-glycero-beta-D-manno-heptose 7-phosphate: step 4/4.</text>
</comment>
<comment type="subunit">
    <text evidence="1">Homopentamer.</text>
</comment>
<comment type="domain">
    <text evidence="1">Contains a large N-terminal NADP-binding domain, and a smaller C-terminal substrate-binding domain.</text>
</comment>
<comment type="similarity">
    <text evidence="1">Belongs to the NAD(P)-dependent epimerase/dehydratase family. HldD subfamily.</text>
</comment>
<name>HLDD_ECO7I</name>
<sequence length="310" mass="34894">MIIVTGGAGFIGSNIVKALNDKGITDILVVDNLKDGTKFVNLVDLDIADYMDKEDFLIQIMAGEEFGDVEAIFHEGACSSTTEWDGKYMMDNNYQYSKELLHYCLEREIPFLYASSAATYGGRTSDFIESREYEKPLNVYGYSKFLFDEYVRQILPEANSQIVGFRYFNVYGPREGHKGSMASVAFHLNTQLNNGESPKLFEGSENFKRDFVYVGDVADVNLWFLENGVSGIFNLGTGRAESFQAVADATLAYHKKGQIEYIPFPDKLKGRYQAFTQADLTNLRAAGYDKPFKTVAEGVTEYMAWLNRDA</sequence>
<organism>
    <name type="scientific">Escherichia coli O7:K1 (strain IAI39 / ExPEC)</name>
    <dbReference type="NCBI Taxonomy" id="585057"/>
    <lineage>
        <taxon>Bacteria</taxon>
        <taxon>Pseudomonadati</taxon>
        <taxon>Pseudomonadota</taxon>
        <taxon>Gammaproteobacteria</taxon>
        <taxon>Enterobacterales</taxon>
        <taxon>Enterobacteriaceae</taxon>
        <taxon>Escherichia</taxon>
    </lineage>
</organism>
<protein>
    <recommendedName>
        <fullName evidence="1">ADP-L-glycero-D-manno-heptose-6-epimerase</fullName>
        <ecNumber evidence="1">5.1.3.20</ecNumber>
    </recommendedName>
    <alternativeName>
        <fullName evidence="1">ADP-L-glycero-beta-D-manno-heptose-6-epimerase</fullName>
        <shortName evidence="1">ADP-glyceromanno-heptose 6-epimerase</shortName>
        <shortName evidence="1">ADP-hep 6-epimerase</shortName>
        <shortName evidence="1">AGME</shortName>
    </alternativeName>
</protein>
<gene>
    <name evidence="1" type="primary">hldD</name>
    <name type="ordered locus">ECIAI39_4139</name>
</gene>
<accession>B7NPC7</accession>
<feature type="chain" id="PRO_1000190405" description="ADP-L-glycero-D-manno-heptose-6-epimerase">
    <location>
        <begin position="1"/>
        <end position="310"/>
    </location>
</feature>
<feature type="active site" description="Proton acceptor" evidence="1">
    <location>
        <position position="140"/>
    </location>
</feature>
<feature type="active site" description="Proton acceptor" evidence="1">
    <location>
        <position position="178"/>
    </location>
</feature>
<feature type="binding site" evidence="1">
    <location>
        <begin position="10"/>
        <end position="11"/>
    </location>
    <ligand>
        <name>NADP(+)</name>
        <dbReference type="ChEBI" id="CHEBI:58349"/>
    </ligand>
</feature>
<feature type="binding site" evidence="1">
    <location>
        <begin position="31"/>
        <end position="32"/>
    </location>
    <ligand>
        <name>NADP(+)</name>
        <dbReference type="ChEBI" id="CHEBI:58349"/>
    </ligand>
</feature>
<feature type="binding site" evidence="1">
    <location>
        <position position="38"/>
    </location>
    <ligand>
        <name>NADP(+)</name>
        <dbReference type="ChEBI" id="CHEBI:58349"/>
    </ligand>
</feature>
<feature type="binding site" evidence="1">
    <location>
        <position position="53"/>
    </location>
    <ligand>
        <name>NADP(+)</name>
        <dbReference type="ChEBI" id="CHEBI:58349"/>
    </ligand>
</feature>
<feature type="binding site" evidence="1">
    <location>
        <begin position="75"/>
        <end position="79"/>
    </location>
    <ligand>
        <name>NADP(+)</name>
        <dbReference type="ChEBI" id="CHEBI:58349"/>
    </ligand>
</feature>
<feature type="binding site" evidence="1">
    <location>
        <position position="92"/>
    </location>
    <ligand>
        <name>NADP(+)</name>
        <dbReference type="ChEBI" id="CHEBI:58349"/>
    </ligand>
</feature>
<feature type="binding site" evidence="1">
    <location>
        <position position="144"/>
    </location>
    <ligand>
        <name>NADP(+)</name>
        <dbReference type="ChEBI" id="CHEBI:58349"/>
    </ligand>
</feature>
<feature type="binding site" evidence="1">
    <location>
        <position position="169"/>
    </location>
    <ligand>
        <name>substrate</name>
    </ligand>
</feature>
<feature type="binding site" evidence="1">
    <location>
        <position position="170"/>
    </location>
    <ligand>
        <name>NADP(+)</name>
        <dbReference type="ChEBI" id="CHEBI:58349"/>
    </ligand>
</feature>
<feature type="binding site" evidence="1">
    <location>
        <position position="178"/>
    </location>
    <ligand>
        <name>NADP(+)</name>
        <dbReference type="ChEBI" id="CHEBI:58349"/>
    </ligand>
</feature>
<feature type="binding site" evidence="1">
    <location>
        <position position="180"/>
    </location>
    <ligand>
        <name>substrate</name>
    </ligand>
</feature>
<feature type="binding site" evidence="1">
    <location>
        <position position="187"/>
    </location>
    <ligand>
        <name>substrate</name>
    </ligand>
</feature>
<feature type="binding site" evidence="1">
    <location>
        <begin position="201"/>
        <end position="204"/>
    </location>
    <ligand>
        <name>substrate</name>
    </ligand>
</feature>
<feature type="binding site" evidence="1">
    <location>
        <position position="209"/>
    </location>
    <ligand>
        <name>substrate</name>
    </ligand>
</feature>
<feature type="binding site" evidence="1">
    <location>
        <position position="272"/>
    </location>
    <ligand>
        <name>substrate</name>
    </ligand>
</feature>
<feature type="modified residue" description="N6-acetyllysine" evidence="1">
    <location>
        <position position="267"/>
    </location>
</feature>